<gene>
    <name evidence="1" type="primary">rplB</name>
    <name type="ordered locus">BB_0481</name>
</gene>
<name>RL2_BORBU</name>
<keyword id="KW-0002">3D-structure</keyword>
<keyword id="KW-1185">Reference proteome</keyword>
<keyword id="KW-0687">Ribonucleoprotein</keyword>
<keyword id="KW-0689">Ribosomal protein</keyword>
<keyword id="KW-0694">RNA-binding</keyword>
<keyword id="KW-0699">rRNA-binding</keyword>
<accession>P94270</accession>
<accession>O51434</accession>
<comment type="function">
    <text evidence="1">One of the primary rRNA binding proteins. Required for association of the 30S and 50S subunits to form the 70S ribosome, for tRNA binding and peptide bond formation. It has been suggested to have peptidyltransferase activity; this is somewhat controversial. Makes several contacts with the 16S rRNA in the 70S ribosome.</text>
</comment>
<comment type="subunit">
    <text evidence="1">Part of the 50S ribosomal subunit. Forms a bridge to the 30S subunit in the 70S ribosome.</text>
</comment>
<comment type="biotechnology">
    <text evidence="3">One of 8 loci used for multilocus sequence typing (MLST) in Borrelia burgdorferi (PubMed:18574151).</text>
</comment>
<comment type="similarity">
    <text evidence="1">Belongs to the universal ribosomal protein uL2 family.</text>
</comment>
<organism>
    <name type="scientific">Borreliella burgdorferi (strain ATCC 35210 / DSM 4680 / CIP 102532 / B31)</name>
    <name type="common">Borrelia burgdorferi</name>
    <dbReference type="NCBI Taxonomy" id="224326"/>
    <lineage>
        <taxon>Bacteria</taxon>
        <taxon>Pseudomonadati</taxon>
        <taxon>Spirochaetota</taxon>
        <taxon>Spirochaetia</taxon>
        <taxon>Spirochaetales</taxon>
        <taxon>Borreliaceae</taxon>
        <taxon>Borreliella</taxon>
    </lineage>
</organism>
<protein>
    <recommendedName>
        <fullName evidence="1">Large ribosomal subunit protein uL2</fullName>
    </recommendedName>
    <alternativeName>
        <fullName evidence="4">50S ribosomal protein L2</fullName>
    </alternativeName>
</protein>
<dbReference type="EMBL" id="U78193">
    <property type="protein sequence ID" value="AAB36825.1"/>
    <property type="molecule type" value="Genomic_DNA"/>
</dbReference>
<dbReference type="EMBL" id="AE000783">
    <property type="protein sequence ID" value="AAC66861.1"/>
    <property type="molecule type" value="Genomic_DNA"/>
</dbReference>
<dbReference type="PIR" id="H70159">
    <property type="entry name" value="H70159"/>
</dbReference>
<dbReference type="RefSeq" id="NP_212615.1">
    <property type="nucleotide sequence ID" value="NC_001318.1"/>
</dbReference>
<dbReference type="RefSeq" id="WP_002557072.1">
    <property type="nucleotide sequence ID" value="NC_001318.1"/>
</dbReference>
<dbReference type="PDB" id="8FMW">
    <property type="method" value="EM"/>
    <property type="resolution" value="2.86 A"/>
    <property type="chains" value="AD=1-277"/>
</dbReference>
<dbReference type="PDB" id="8FN2">
    <property type="method" value="EM"/>
    <property type="resolution" value="3.40 A"/>
    <property type="chains" value="D=1-277"/>
</dbReference>
<dbReference type="PDBsum" id="8FMW"/>
<dbReference type="PDBsum" id="8FN2"/>
<dbReference type="EMDB" id="EMD-29298"/>
<dbReference type="EMDB" id="EMD-29304"/>
<dbReference type="SMR" id="P94270"/>
<dbReference type="STRING" id="224326.BB_0481"/>
<dbReference type="PaxDb" id="224326-BB_0481"/>
<dbReference type="EnsemblBacteria" id="AAC66861">
    <property type="protein sequence ID" value="AAC66861"/>
    <property type="gene ID" value="BB_0481"/>
</dbReference>
<dbReference type="GeneID" id="56567916"/>
<dbReference type="KEGG" id="bbu:BB_0481"/>
<dbReference type="PATRIC" id="fig|224326.49.peg.872"/>
<dbReference type="HOGENOM" id="CLU_036235_2_1_12"/>
<dbReference type="OrthoDB" id="9778722at2"/>
<dbReference type="Proteomes" id="UP000001807">
    <property type="component" value="Chromosome"/>
</dbReference>
<dbReference type="GO" id="GO:0015934">
    <property type="term" value="C:large ribosomal subunit"/>
    <property type="evidence" value="ECO:0007669"/>
    <property type="project" value="InterPro"/>
</dbReference>
<dbReference type="GO" id="GO:0019843">
    <property type="term" value="F:rRNA binding"/>
    <property type="evidence" value="ECO:0007669"/>
    <property type="project" value="UniProtKB-UniRule"/>
</dbReference>
<dbReference type="GO" id="GO:0003735">
    <property type="term" value="F:structural constituent of ribosome"/>
    <property type="evidence" value="ECO:0007669"/>
    <property type="project" value="InterPro"/>
</dbReference>
<dbReference type="GO" id="GO:0016740">
    <property type="term" value="F:transferase activity"/>
    <property type="evidence" value="ECO:0007669"/>
    <property type="project" value="InterPro"/>
</dbReference>
<dbReference type="GO" id="GO:0002181">
    <property type="term" value="P:cytoplasmic translation"/>
    <property type="evidence" value="ECO:0007669"/>
    <property type="project" value="TreeGrafter"/>
</dbReference>
<dbReference type="FunFam" id="2.30.30.30:FF:000001">
    <property type="entry name" value="50S ribosomal protein L2"/>
    <property type="match status" value="1"/>
</dbReference>
<dbReference type="FunFam" id="2.40.50.140:FF:000003">
    <property type="entry name" value="50S ribosomal protein L2"/>
    <property type="match status" value="1"/>
</dbReference>
<dbReference type="FunFam" id="4.10.950.10:FF:000001">
    <property type="entry name" value="50S ribosomal protein L2"/>
    <property type="match status" value="1"/>
</dbReference>
<dbReference type="Gene3D" id="2.30.30.30">
    <property type="match status" value="1"/>
</dbReference>
<dbReference type="Gene3D" id="2.40.50.140">
    <property type="entry name" value="Nucleic acid-binding proteins"/>
    <property type="match status" value="1"/>
</dbReference>
<dbReference type="Gene3D" id="4.10.950.10">
    <property type="entry name" value="Ribosomal protein L2, domain 3"/>
    <property type="match status" value="1"/>
</dbReference>
<dbReference type="HAMAP" id="MF_01320_B">
    <property type="entry name" value="Ribosomal_uL2_B"/>
    <property type="match status" value="1"/>
</dbReference>
<dbReference type="InterPro" id="IPR012340">
    <property type="entry name" value="NA-bd_OB-fold"/>
</dbReference>
<dbReference type="InterPro" id="IPR014722">
    <property type="entry name" value="Rib_uL2_dom2"/>
</dbReference>
<dbReference type="InterPro" id="IPR002171">
    <property type="entry name" value="Ribosomal_uL2"/>
</dbReference>
<dbReference type="InterPro" id="IPR005880">
    <property type="entry name" value="Ribosomal_uL2_bac/org-type"/>
</dbReference>
<dbReference type="InterPro" id="IPR022669">
    <property type="entry name" value="Ribosomal_uL2_C"/>
</dbReference>
<dbReference type="InterPro" id="IPR022671">
    <property type="entry name" value="Ribosomal_uL2_CS"/>
</dbReference>
<dbReference type="InterPro" id="IPR014726">
    <property type="entry name" value="Ribosomal_uL2_dom3"/>
</dbReference>
<dbReference type="InterPro" id="IPR022666">
    <property type="entry name" value="Ribosomal_uL2_RNA-bd_dom"/>
</dbReference>
<dbReference type="InterPro" id="IPR008991">
    <property type="entry name" value="Translation_prot_SH3-like_sf"/>
</dbReference>
<dbReference type="NCBIfam" id="TIGR01171">
    <property type="entry name" value="rplB_bact"/>
    <property type="match status" value="1"/>
</dbReference>
<dbReference type="PANTHER" id="PTHR13691:SF5">
    <property type="entry name" value="LARGE RIBOSOMAL SUBUNIT PROTEIN UL2M"/>
    <property type="match status" value="1"/>
</dbReference>
<dbReference type="PANTHER" id="PTHR13691">
    <property type="entry name" value="RIBOSOMAL PROTEIN L2"/>
    <property type="match status" value="1"/>
</dbReference>
<dbReference type="Pfam" id="PF00181">
    <property type="entry name" value="Ribosomal_L2"/>
    <property type="match status" value="1"/>
</dbReference>
<dbReference type="Pfam" id="PF03947">
    <property type="entry name" value="Ribosomal_L2_C"/>
    <property type="match status" value="1"/>
</dbReference>
<dbReference type="PIRSF" id="PIRSF002158">
    <property type="entry name" value="Ribosomal_L2"/>
    <property type="match status" value="1"/>
</dbReference>
<dbReference type="SMART" id="SM01383">
    <property type="entry name" value="Ribosomal_L2"/>
    <property type="match status" value="1"/>
</dbReference>
<dbReference type="SMART" id="SM01382">
    <property type="entry name" value="Ribosomal_L2_C"/>
    <property type="match status" value="1"/>
</dbReference>
<dbReference type="SUPFAM" id="SSF50249">
    <property type="entry name" value="Nucleic acid-binding proteins"/>
    <property type="match status" value="1"/>
</dbReference>
<dbReference type="SUPFAM" id="SSF50104">
    <property type="entry name" value="Translation proteins SH3-like domain"/>
    <property type="match status" value="1"/>
</dbReference>
<dbReference type="PROSITE" id="PS00467">
    <property type="entry name" value="RIBOSOMAL_L2"/>
    <property type="match status" value="1"/>
</dbReference>
<sequence>MGIKTYKPKTSSLRYKTTLSFDDLSKGNDPLKSLTKGKKFKSGRDSSGRISIRRRGGGHKRKYRLIDFNRRDKFSIPARVASIEYDPNRSANIALLVYKDGEKRYIISPKGIKVGDVLESGPNAPIKIGNALPLENIPIGRTVHNIELNVGKGGQLIRSAGGYAMILASDGNYVTVKLSSGEMRLIFKKCIATIGEIGNEDYANISIGKAGKSRWLGRRPKVRGVAMNPVDHPHGGGEGKTSGGRHPVSPWGQPTKGYKTRKKKRYSDKFIIKRRNK</sequence>
<feature type="chain" id="PRO_0000129533" description="Large ribosomal subunit protein uL2">
    <location>
        <begin position="1"/>
        <end position="277"/>
    </location>
</feature>
<feature type="region of interest" description="Disordered" evidence="2">
    <location>
        <begin position="32"/>
        <end position="58"/>
    </location>
</feature>
<feature type="region of interest" description="Disordered" evidence="2">
    <location>
        <begin position="225"/>
        <end position="277"/>
    </location>
</feature>
<feature type="compositionally biased region" description="Basic residues" evidence="2">
    <location>
        <begin position="258"/>
        <end position="277"/>
    </location>
</feature>
<feature type="sequence conflict" description="In Ref. 1; AAB36825." evidence="4" ref="1">
    <original>F</original>
    <variation>L</variation>
    <location>
        <position position="21"/>
    </location>
</feature>
<feature type="sequence conflict" description="In Ref. 1; AAB36825." evidence="4" ref="1">
    <original>L</original>
    <variation>K</variation>
    <location>
        <position position="34"/>
    </location>
</feature>
<feature type="sequence conflict" description="In Ref. 1; AAB36825." evidence="4" ref="1">
    <original>S</original>
    <variation>P</variation>
    <location>
        <position position="47"/>
    </location>
</feature>
<feature type="strand" evidence="5">
    <location>
        <begin position="3"/>
        <end position="5"/>
    </location>
</feature>
<feature type="helix" evidence="5">
    <location>
        <begin position="13"/>
        <end position="15"/>
    </location>
</feature>
<feature type="strand" evidence="5">
    <location>
        <begin position="17"/>
        <end position="19"/>
    </location>
</feature>
<feature type="helix" evidence="5">
    <location>
        <begin position="32"/>
        <end position="34"/>
    </location>
</feature>
<feature type="strand" evidence="5">
    <location>
        <begin position="35"/>
        <end position="37"/>
    </location>
</feature>
<feature type="strand" evidence="5">
    <location>
        <begin position="48"/>
        <end position="52"/>
    </location>
</feature>
<feature type="strand" evidence="5">
    <location>
        <begin position="62"/>
        <end position="64"/>
    </location>
</feature>
<feature type="helix" evidence="5">
    <location>
        <begin position="71"/>
        <end position="73"/>
    </location>
</feature>
<feature type="strand" evidence="5">
    <location>
        <begin position="78"/>
        <end position="84"/>
    </location>
</feature>
<feature type="strand" evidence="5">
    <location>
        <begin position="89"/>
        <end position="91"/>
    </location>
</feature>
<feature type="strand" evidence="5">
    <location>
        <begin position="93"/>
        <end position="98"/>
    </location>
</feature>
<feature type="strand" evidence="5">
    <location>
        <begin position="103"/>
        <end position="107"/>
    </location>
</feature>
<feature type="strand" evidence="5">
    <location>
        <begin position="109"/>
        <end position="111"/>
    </location>
</feature>
<feature type="strand" evidence="5">
    <location>
        <begin position="131"/>
        <end position="133"/>
    </location>
</feature>
<feature type="turn" evidence="5">
    <location>
        <begin position="134"/>
        <end position="136"/>
    </location>
</feature>
<feature type="strand" evidence="5">
    <location>
        <begin position="142"/>
        <end position="145"/>
    </location>
</feature>
<feature type="strand" evidence="5">
    <location>
        <begin position="147"/>
        <end position="149"/>
    </location>
</feature>
<feature type="turn" evidence="5">
    <location>
        <begin position="150"/>
        <end position="152"/>
    </location>
</feature>
<feature type="strand" evidence="5">
    <location>
        <begin position="164"/>
        <end position="170"/>
    </location>
</feature>
<feature type="strand" evidence="5">
    <location>
        <begin position="173"/>
        <end position="177"/>
    </location>
</feature>
<feature type="strand" evidence="5">
    <location>
        <begin position="183"/>
        <end position="187"/>
    </location>
</feature>
<feature type="strand" evidence="5">
    <location>
        <begin position="190"/>
        <end position="195"/>
    </location>
</feature>
<feature type="turn" evidence="5">
    <location>
        <begin position="200"/>
        <end position="203"/>
    </location>
</feature>
<feature type="helix" evidence="5">
    <location>
        <begin position="210"/>
        <end position="215"/>
    </location>
</feature>
<feature type="turn" evidence="5">
    <location>
        <begin position="229"/>
        <end position="231"/>
    </location>
</feature>
<feature type="strand" evidence="5">
    <location>
        <begin position="244"/>
        <end position="246"/>
    </location>
</feature>
<feature type="helix" evidence="5">
    <location>
        <begin position="266"/>
        <end position="270"/>
    </location>
</feature>
<feature type="strand" evidence="5">
    <location>
        <begin position="271"/>
        <end position="273"/>
    </location>
</feature>
<reference key="1">
    <citation type="submission" date="1996-12" db="EMBL/GenBank/DDBJ databases">
        <authorList>
            <person name="Perlee L."/>
            <person name="Qi H."/>
            <person name="Schwartz I."/>
        </authorList>
    </citation>
    <scope>NUCLEOTIDE SEQUENCE [GENOMIC DNA]</scope>
    <source>
        <strain>ATCC 35210 / DSM 4680 / CIP 102532 / B31</strain>
    </source>
</reference>
<reference key="2">
    <citation type="journal article" date="1997" name="Nature">
        <title>Genomic sequence of a Lyme disease spirochaete, Borrelia burgdorferi.</title>
        <authorList>
            <person name="Fraser C.M."/>
            <person name="Casjens S."/>
            <person name="Huang W.M."/>
            <person name="Sutton G.G."/>
            <person name="Clayton R.A."/>
            <person name="Lathigra R."/>
            <person name="White O."/>
            <person name="Ketchum K.A."/>
            <person name="Dodson R.J."/>
            <person name="Hickey E.K."/>
            <person name="Gwinn M.L."/>
            <person name="Dougherty B.A."/>
            <person name="Tomb J.-F."/>
            <person name="Fleischmann R.D."/>
            <person name="Richardson D.L."/>
            <person name="Peterson J.D."/>
            <person name="Kerlavage A.R."/>
            <person name="Quackenbush J."/>
            <person name="Salzberg S.L."/>
            <person name="Hanson M."/>
            <person name="van Vugt R."/>
            <person name="Palmer N."/>
            <person name="Adams M.D."/>
            <person name="Gocayne J.D."/>
            <person name="Weidman J.F."/>
            <person name="Utterback T.R."/>
            <person name="Watthey L."/>
            <person name="McDonald L.A."/>
            <person name="Artiach P."/>
            <person name="Bowman C."/>
            <person name="Garland S.A."/>
            <person name="Fujii C."/>
            <person name="Cotton M.D."/>
            <person name="Horst K."/>
            <person name="Roberts K.M."/>
            <person name="Hatch B."/>
            <person name="Smith H.O."/>
            <person name="Venter J.C."/>
        </authorList>
    </citation>
    <scope>NUCLEOTIDE SEQUENCE [LARGE SCALE GENOMIC DNA]</scope>
    <source>
        <strain>ATCC 35210 / DSM 4680 / CIP 102532 / B31</strain>
    </source>
</reference>
<reference key="3">
    <citation type="journal article" date="2008" name="Proc. Natl. Acad. Sci. U.S.A.">
        <title>MLST of housekeeping genes captures geographic population structure and suggests a European origin of Borrelia burgdorferi.</title>
        <authorList>
            <person name="Margos G."/>
            <person name="Gatewood A.G."/>
            <person name="Aanensen D.M."/>
            <person name="Hanincova K."/>
            <person name="Terekhova D."/>
            <person name="Vollmer S.A."/>
            <person name="Cornet M."/>
            <person name="Piesman J."/>
            <person name="Donaghy M."/>
            <person name="Bormane A."/>
            <person name="Hurn M.A."/>
            <person name="Feil E.J."/>
            <person name="Fish D."/>
            <person name="Casjens S."/>
            <person name="Wormser G.P."/>
            <person name="Schwartz I."/>
            <person name="Kurtenbach K."/>
        </authorList>
    </citation>
    <scope>BIOTECHNOLOGY</scope>
    <source>
        <strain>ATCC 35210 / DSM 4680 / CIP 102532 / B31</strain>
    </source>
</reference>
<evidence type="ECO:0000255" key="1">
    <source>
        <dbReference type="HAMAP-Rule" id="MF_01320"/>
    </source>
</evidence>
<evidence type="ECO:0000256" key="2">
    <source>
        <dbReference type="SAM" id="MobiDB-lite"/>
    </source>
</evidence>
<evidence type="ECO:0000269" key="3">
    <source>
    </source>
</evidence>
<evidence type="ECO:0000305" key="4"/>
<evidence type="ECO:0007829" key="5">
    <source>
        <dbReference type="PDB" id="8FN2"/>
    </source>
</evidence>
<proteinExistence type="evidence at protein level"/>